<reference key="1">
    <citation type="journal article" date="2004" name="Nat. Genet.">
        <title>Complete sequencing and characterization of 21,243 full-length human cDNAs.</title>
        <authorList>
            <person name="Ota T."/>
            <person name="Suzuki Y."/>
            <person name="Nishikawa T."/>
            <person name="Otsuki T."/>
            <person name="Sugiyama T."/>
            <person name="Irie R."/>
            <person name="Wakamatsu A."/>
            <person name="Hayashi K."/>
            <person name="Sato H."/>
            <person name="Nagai K."/>
            <person name="Kimura K."/>
            <person name="Makita H."/>
            <person name="Sekine M."/>
            <person name="Obayashi M."/>
            <person name="Nishi T."/>
            <person name="Shibahara T."/>
            <person name="Tanaka T."/>
            <person name="Ishii S."/>
            <person name="Yamamoto J."/>
            <person name="Saito K."/>
            <person name="Kawai Y."/>
            <person name="Isono Y."/>
            <person name="Nakamura Y."/>
            <person name="Nagahari K."/>
            <person name="Murakami K."/>
            <person name="Yasuda T."/>
            <person name="Iwayanagi T."/>
            <person name="Wagatsuma M."/>
            <person name="Shiratori A."/>
            <person name="Sudo H."/>
            <person name="Hosoiri T."/>
            <person name="Kaku Y."/>
            <person name="Kodaira H."/>
            <person name="Kondo H."/>
            <person name="Sugawara M."/>
            <person name="Takahashi M."/>
            <person name="Kanda K."/>
            <person name="Yokoi T."/>
            <person name="Furuya T."/>
            <person name="Kikkawa E."/>
            <person name="Omura Y."/>
            <person name="Abe K."/>
            <person name="Kamihara K."/>
            <person name="Katsuta N."/>
            <person name="Sato K."/>
            <person name="Tanikawa M."/>
            <person name="Yamazaki M."/>
            <person name="Ninomiya K."/>
            <person name="Ishibashi T."/>
            <person name="Yamashita H."/>
            <person name="Murakawa K."/>
            <person name="Fujimori K."/>
            <person name="Tanai H."/>
            <person name="Kimata M."/>
            <person name="Watanabe M."/>
            <person name="Hiraoka S."/>
            <person name="Chiba Y."/>
            <person name="Ishida S."/>
            <person name="Ono Y."/>
            <person name="Takiguchi S."/>
            <person name="Watanabe S."/>
            <person name="Yosida M."/>
            <person name="Hotuta T."/>
            <person name="Kusano J."/>
            <person name="Kanehori K."/>
            <person name="Takahashi-Fujii A."/>
            <person name="Hara H."/>
            <person name="Tanase T.-O."/>
            <person name="Nomura Y."/>
            <person name="Togiya S."/>
            <person name="Komai F."/>
            <person name="Hara R."/>
            <person name="Takeuchi K."/>
            <person name="Arita M."/>
            <person name="Imose N."/>
            <person name="Musashino K."/>
            <person name="Yuuki H."/>
            <person name="Oshima A."/>
            <person name="Sasaki N."/>
            <person name="Aotsuka S."/>
            <person name="Yoshikawa Y."/>
            <person name="Matsunawa H."/>
            <person name="Ichihara T."/>
            <person name="Shiohata N."/>
            <person name="Sano S."/>
            <person name="Moriya S."/>
            <person name="Momiyama H."/>
            <person name="Satoh N."/>
            <person name="Takami S."/>
            <person name="Terashima Y."/>
            <person name="Suzuki O."/>
            <person name="Nakagawa S."/>
            <person name="Senoh A."/>
            <person name="Mizoguchi H."/>
            <person name="Goto Y."/>
            <person name="Shimizu F."/>
            <person name="Wakebe H."/>
            <person name="Hishigaki H."/>
            <person name="Watanabe T."/>
            <person name="Sugiyama A."/>
            <person name="Takemoto M."/>
            <person name="Kawakami B."/>
            <person name="Yamazaki M."/>
            <person name="Watanabe K."/>
            <person name="Kumagai A."/>
            <person name="Itakura S."/>
            <person name="Fukuzumi Y."/>
            <person name="Fujimori Y."/>
            <person name="Komiyama M."/>
            <person name="Tashiro H."/>
            <person name="Tanigami A."/>
            <person name="Fujiwara T."/>
            <person name="Ono T."/>
            <person name="Yamada K."/>
            <person name="Fujii Y."/>
            <person name="Ozaki K."/>
            <person name="Hirao M."/>
            <person name="Ohmori Y."/>
            <person name="Kawabata A."/>
            <person name="Hikiji T."/>
            <person name="Kobatake N."/>
            <person name="Inagaki H."/>
            <person name="Ikema Y."/>
            <person name="Okamoto S."/>
            <person name="Okitani R."/>
            <person name="Kawakami T."/>
            <person name="Noguchi S."/>
            <person name="Itoh T."/>
            <person name="Shigeta K."/>
            <person name="Senba T."/>
            <person name="Matsumura K."/>
            <person name="Nakajima Y."/>
            <person name="Mizuno T."/>
            <person name="Morinaga M."/>
            <person name="Sasaki M."/>
            <person name="Togashi T."/>
            <person name="Oyama M."/>
            <person name="Hata H."/>
            <person name="Watanabe M."/>
            <person name="Komatsu T."/>
            <person name="Mizushima-Sugano J."/>
            <person name="Satoh T."/>
            <person name="Shirai Y."/>
            <person name="Takahashi Y."/>
            <person name="Nakagawa K."/>
            <person name="Okumura K."/>
            <person name="Nagase T."/>
            <person name="Nomura N."/>
            <person name="Kikuchi H."/>
            <person name="Masuho Y."/>
            <person name="Yamashita R."/>
            <person name="Nakai K."/>
            <person name="Yada T."/>
            <person name="Nakamura Y."/>
            <person name="Ohara O."/>
            <person name="Isogai T."/>
            <person name="Sugano S."/>
        </authorList>
    </citation>
    <scope>NUCLEOTIDE SEQUENCE [LARGE SCALE MRNA] (ISOFORM 2)</scope>
</reference>
<reference key="2">
    <citation type="journal article" date="2004" name="Genome Res.">
        <title>The status, quality, and expansion of the NIH full-length cDNA project: the Mammalian Gene Collection (MGC).</title>
        <authorList>
            <consortium name="The MGC Project Team"/>
        </authorList>
    </citation>
    <scope>NUCLEOTIDE SEQUENCE [LARGE SCALE MRNA] (ISOFORM 3)</scope>
    <source>
        <tissue>Brain</tissue>
        <tissue>Prostate</tissue>
    </source>
</reference>
<reference key="3">
    <citation type="journal article" date="2007" name="BMC Genomics">
        <title>The full-ORF clone resource of the German cDNA consortium.</title>
        <authorList>
            <person name="Bechtel S."/>
            <person name="Rosenfelder H."/>
            <person name="Duda A."/>
            <person name="Schmidt C.P."/>
            <person name="Ernst U."/>
            <person name="Wellenreuther R."/>
            <person name="Mehrle A."/>
            <person name="Schuster C."/>
            <person name="Bahr A."/>
            <person name="Bloecker H."/>
            <person name="Heubner D."/>
            <person name="Hoerlein A."/>
            <person name="Michel G."/>
            <person name="Wedler H."/>
            <person name="Koehrer K."/>
            <person name="Ottenwaelder B."/>
            <person name="Poustka A."/>
            <person name="Wiemann S."/>
            <person name="Schupp I."/>
        </authorList>
    </citation>
    <scope>NUCLEOTIDE SEQUENCE [LARGE SCALE MRNA] OF 94-257 (ISOFORM 1)</scope>
    <source>
        <tissue>Stomach</tissue>
    </source>
</reference>
<reference key="4">
    <citation type="journal article" date="2023" name="Nature">
        <title>Identification of an alternative triglyceride biosynthesis pathway.</title>
        <authorList>
            <person name="McLelland G.L."/>
            <person name="Lopez-Osias M."/>
            <person name="Verzijl C.R.C."/>
            <person name="Ellenbroek B.D."/>
            <person name="Oliveira R.A."/>
            <person name="Boon N.J."/>
            <person name="Dekker M."/>
            <person name="van den Hengel L.G."/>
            <person name="Ali R."/>
            <person name="Janssen H."/>
            <person name="Song J.Y."/>
            <person name="Krimpenfort P."/>
            <person name="van Zutphen T."/>
            <person name="Jonker J.W."/>
            <person name="Brummelkamp T.R."/>
        </authorList>
    </citation>
    <scope>FUNCTION</scope>
    <scope>CATALYTIC ACTIVITY</scope>
    <scope>ACTIVITY REGULATION</scope>
    <scope>ACTIVE SITE</scope>
    <scope>SUBCELLULAR LOCATION</scope>
    <scope>GLYCOSYLATION AT ASN-5</scope>
    <scope>MUTAGENESIS OF HIS-130</scope>
</reference>
<name>DIESL_HUMAN</name>
<keyword id="KW-0012">Acyltransferase</keyword>
<keyword id="KW-0025">Alternative splicing</keyword>
<keyword id="KW-0256">Endoplasmic reticulum</keyword>
<keyword id="KW-0325">Glycoprotein</keyword>
<keyword id="KW-0443">Lipid metabolism</keyword>
<keyword id="KW-0472">Membrane</keyword>
<keyword id="KW-1267">Proteomics identification</keyword>
<keyword id="KW-1185">Reference proteome</keyword>
<keyword id="KW-0808">Transferase</keyword>
<keyword id="KW-0812">Transmembrane</keyword>
<keyword id="KW-1133">Transmembrane helix</keyword>
<comment type="function">
    <text evidence="1 3">Catalytic subunit of the alternative triglyceride biosynthesis pathway, which mediates formation of triacylglycerol from diacylglycerol and membrane phospholipids (PubMed:37648867). Synthesizes triacylglycerol at the expense of membrane phospholipids, such as phosphatidylcholine (PC) and its ether-linked form (ePC), thereby altering the composition of membranes (PubMed:37648867). The alternative triglyceride biosynthesis pathway is probably required to provide the energy required for rapid growth when fuel sources are limiting (PubMed:37648867). It maintains mitochondrial function during periods of extracellular lipid starvation (PubMed:37648867). Can also use acyl-CoA as donor: acts as a acyl-CoA:monoacylglycerol acyltransferase (MGAT), but also shows acyl-CoA:diacylglycerol acyltransferase (DGAT) activity (By similarity).</text>
</comment>
<comment type="catalytic activity">
    <reaction evidence="3">
        <text>a 1,2-diacylglycerol + a 1,2-diacyl-sn-glycero-3-phosphocholine = a triacylglycerol + a 1-acyl-sn-glycero-3-phosphocholine</text>
        <dbReference type="Rhea" id="RHEA:77743"/>
        <dbReference type="ChEBI" id="CHEBI:17855"/>
        <dbReference type="ChEBI" id="CHEBI:49172"/>
        <dbReference type="ChEBI" id="CHEBI:57643"/>
        <dbReference type="ChEBI" id="CHEBI:58168"/>
    </reaction>
    <physiologicalReaction direction="left-to-right" evidence="3">
        <dbReference type="Rhea" id="RHEA:77744"/>
    </physiologicalReaction>
</comment>
<comment type="catalytic activity">
    <reaction evidence="3">
        <text>a 1-O-alkyl-2-acyl-sn-glycero-3-phosphocholine + a 1,2-diacylglycerol = a 1-O-alkyl-sn-glycero-3-phosphocholine + a triacylglycerol</text>
        <dbReference type="Rhea" id="RHEA:77759"/>
        <dbReference type="ChEBI" id="CHEBI:17855"/>
        <dbReference type="ChEBI" id="CHEBI:30909"/>
        <dbReference type="ChEBI" id="CHEBI:36702"/>
        <dbReference type="ChEBI" id="CHEBI:49172"/>
    </reaction>
    <physiologicalReaction direction="left-to-right" evidence="3">
        <dbReference type="Rhea" id="RHEA:77760"/>
    </physiologicalReaction>
</comment>
<comment type="catalytic activity">
    <reaction evidence="1">
        <text>a 2-acylglycerol + an acyl-CoA = a 1,2-diacylglycerol + CoA</text>
        <dbReference type="Rhea" id="RHEA:16741"/>
        <dbReference type="ChEBI" id="CHEBI:17389"/>
        <dbReference type="ChEBI" id="CHEBI:49172"/>
        <dbReference type="ChEBI" id="CHEBI:57287"/>
        <dbReference type="ChEBI" id="CHEBI:58342"/>
        <dbReference type="EC" id="2.3.1.22"/>
    </reaction>
    <physiologicalReaction direction="left-to-right" evidence="1">
        <dbReference type="Rhea" id="RHEA:16742"/>
    </physiologicalReaction>
</comment>
<comment type="catalytic activity">
    <reaction evidence="1">
        <text>an acyl-CoA + a 1,2-diacyl-sn-glycerol = a triacyl-sn-glycerol + CoA</text>
        <dbReference type="Rhea" id="RHEA:10868"/>
        <dbReference type="ChEBI" id="CHEBI:17815"/>
        <dbReference type="ChEBI" id="CHEBI:57287"/>
        <dbReference type="ChEBI" id="CHEBI:58342"/>
        <dbReference type="ChEBI" id="CHEBI:64615"/>
        <dbReference type="EC" id="2.3.1.20"/>
    </reaction>
    <physiologicalReaction direction="left-to-right" evidence="1">
        <dbReference type="Rhea" id="RHEA:10869"/>
    </physiologicalReaction>
</comment>
<comment type="catalytic activity">
    <reaction evidence="1">
        <text>2-(9Z-octadecenoyl)-glycerol + (9Z)-octadecenoyl-CoA = 1,2-di-(9Z-octadecenoyl)-glycerol + CoA</text>
        <dbReference type="Rhea" id="RHEA:39951"/>
        <dbReference type="ChEBI" id="CHEBI:52323"/>
        <dbReference type="ChEBI" id="CHEBI:57287"/>
        <dbReference type="ChEBI" id="CHEBI:57387"/>
        <dbReference type="ChEBI" id="CHEBI:73990"/>
    </reaction>
    <physiologicalReaction direction="left-to-right" evidence="1">
        <dbReference type="Rhea" id="RHEA:39952"/>
    </physiologicalReaction>
</comment>
<comment type="catalytic activity">
    <reaction evidence="1">
        <text>1,2-di-(9Z-octadecenoyl)-sn-glycerol + (9Z)-octadecenoyl-CoA = 1,2,3-tri-(9Z-octadecenoyl)-glycerol + CoA</text>
        <dbReference type="Rhea" id="RHEA:38219"/>
        <dbReference type="ChEBI" id="CHEBI:52333"/>
        <dbReference type="ChEBI" id="CHEBI:53753"/>
        <dbReference type="ChEBI" id="CHEBI:57287"/>
        <dbReference type="ChEBI" id="CHEBI:57387"/>
    </reaction>
    <physiologicalReaction direction="left-to-right" evidence="1">
        <dbReference type="Rhea" id="RHEA:38220"/>
    </physiologicalReaction>
</comment>
<comment type="activity regulation">
    <text evidence="3">Acyltransferase activity is specifically inhibited by TMX1 at the endoplasmic reticulum, restricting accumulation of triacylglycerol.</text>
</comment>
<comment type="subcellular location">
    <subcellularLocation>
        <location evidence="3">Endoplasmic reticulum membrane</location>
        <topology evidence="2">Multi-pass membrane protein</topology>
    </subcellularLocation>
</comment>
<comment type="alternative products">
    <event type="alternative splicing"/>
    <isoform>
        <id>Q96MH6-1</id>
        <name>1</name>
        <sequence type="displayed"/>
    </isoform>
    <isoform>
        <id>Q96MH6-2</id>
        <name>2</name>
        <sequence type="described" ref="VSP_021246"/>
    </isoform>
    <isoform>
        <id>Q96MH6-3</id>
        <name>3</name>
        <sequence type="described" ref="VSP_021244 VSP_021245"/>
    </isoform>
</comment>
<comment type="similarity">
    <text evidence="7">Belongs to the diacylglycerol acyltransferase family. Highly divergent.</text>
</comment>
<feature type="chain" id="PRO_0000254592" description="DGAT1/2-independent enzyme synthesizing storage lipids">
    <location>
        <begin position="1"/>
        <end position="324"/>
    </location>
</feature>
<feature type="topological domain" description="Lumenal" evidence="8">
    <location>
        <begin position="1"/>
        <end position="50"/>
    </location>
</feature>
<feature type="transmembrane region" description="Helical" evidence="2">
    <location>
        <begin position="51"/>
        <end position="71"/>
    </location>
</feature>
<feature type="topological domain" description="Cytoplasmic" evidence="7">
    <location>
        <begin position="72"/>
        <end position="125"/>
    </location>
</feature>
<feature type="transmembrane region" description="Helical" evidence="2">
    <location>
        <begin position="126"/>
        <end position="146"/>
    </location>
</feature>
<feature type="topological domain" description="Lumenal" evidence="7">
    <location>
        <begin position="147"/>
        <end position="324"/>
    </location>
</feature>
<feature type="active site" evidence="3">
    <location>
        <position position="130"/>
    </location>
</feature>
<feature type="glycosylation site" description="N-linked (GlcNAc...) asparagine" evidence="2 3">
    <location>
        <position position="5"/>
    </location>
</feature>
<feature type="splice variant" id="VSP_021244" description="In isoform 3." evidence="5">
    <original>YEVHGMEKIPEDGPALIIFYHGAIPI</original>
    <variation>KQGYFHLCVAIHVCCIGTVLPFHFID</variation>
    <location>
        <begin position="110"/>
        <end position="135"/>
    </location>
</feature>
<feature type="splice variant" id="VSP_021245" description="In isoform 3." evidence="5">
    <location>
        <begin position="136"/>
        <end position="324"/>
    </location>
</feature>
<feature type="splice variant" id="VSP_021246" description="In isoform 2." evidence="4">
    <location>
        <begin position="230"/>
        <end position="296"/>
    </location>
</feature>
<feature type="mutagenesis site" description="Abolished acyltransferase activity." evidence="3">
    <original>H</original>
    <variation>A</variation>
    <location>
        <position position="130"/>
    </location>
</feature>
<protein>
    <recommendedName>
        <fullName evidence="6">DGAT1/2-independent enzyme synthesizing storage lipids</fullName>
        <shortName evidence="6">DIESL</shortName>
        <ecNumber evidence="3">2.3.1.-</ecNumber>
    </recommendedName>
    <alternativeName>
        <fullName>2-acylglycerol/1,2-diacylglycerol O-acyltransferase</fullName>
    </alternativeName>
    <alternativeName>
        <fullName>Monoacylglycerol/Diacylglycerol O-acyltransferase</fullName>
        <shortName>MGAT/DGAT</shortName>
        <ecNumber evidence="1">2.3.1.20</ecNumber>
        <ecNumber evidence="1">2.3.1.22</ecNumber>
    </alternativeName>
    <alternativeName>
        <fullName>Transmembrane protein 68</fullName>
    </alternativeName>
</protein>
<proteinExistence type="evidence at protein level"/>
<evidence type="ECO:0000250" key="1">
    <source>
        <dbReference type="UniProtKB" id="Q9D850"/>
    </source>
</evidence>
<evidence type="ECO:0000255" key="2"/>
<evidence type="ECO:0000269" key="3">
    <source>
    </source>
</evidence>
<evidence type="ECO:0000303" key="4">
    <source>
    </source>
</evidence>
<evidence type="ECO:0000303" key="5">
    <source>
    </source>
</evidence>
<evidence type="ECO:0000303" key="6">
    <source>
    </source>
</evidence>
<evidence type="ECO:0000305" key="7"/>
<evidence type="ECO:0000305" key="8">
    <source>
    </source>
</evidence>
<evidence type="ECO:0000312" key="9">
    <source>
        <dbReference type="HGNC" id="HGNC:26510"/>
    </source>
</evidence>
<gene>
    <name evidence="6 9" type="primary">TMEM68</name>
</gene>
<sequence>MIDKNQTCGVGQDSVPYMICLIHILEEWFGVEQLEDYLNFANYLLWVFTPLILLILPYFTIFLLYLTIIFLHIYKRKNVLKEAYSHNLWDGARKTVATLWDGHAAVWHGYEVHGMEKIPEDGPALIIFYHGAIPIDFYYFMAKIFIHKGRTCRVVADHFVFKIPGFSLLLDVFCALHGPREKCVEILRSGHLLAISPGGVREALISDETYNIVWGHRRGFAQVAIDAKVPIIPMFTQNIREGFRSLGGTRLFRWLYEKFRYPFAPMYGGFPVKLRTYLGDPIPYDPQITAEELAEKTKNAVQALIDKHQRIPGNIMSALLERFH</sequence>
<dbReference type="EC" id="2.3.1.-" evidence="3"/>
<dbReference type="EC" id="2.3.1.20" evidence="1"/>
<dbReference type="EC" id="2.3.1.22" evidence="1"/>
<dbReference type="EMBL" id="AK056932">
    <property type="protein sequence ID" value="BAB71312.1"/>
    <property type="molecule type" value="mRNA"/>
</dbReference>
<dbReference type="EMBL" id="BC020835">
    <property type="protein sequence ID" value="AAH20835.1"/>
    <property type="molecule type" value="mRNA"/>
</dbReference>
<dbReference type="EMBL" id="BC071636">
    <property type="protein sequence ID" value="AAH71636.1"/>
    <property type="molecule type" value="mRNA"/>
</dbReference>
<dbReference type="EMBL" id="AL832935">
    <property type="protein sequence ID" value="CAH56335.1"/>
    <property type="molecule type" value="mRNA"/>
</dbReference>
<dbReference type="CCDS" id="CCDS6161.1">
    <molecule id="Q96MH6-2"/>
</dbReference>
<dbReference type="CCDS" id="CCDS75741.1">
    <molecule id="Q96MH6-3"/>
</dbReference>
<dbReference type="CCDS" id="CCDS75742.1">
    <molecule id="Q96MH6-1"/>
</dbReference>
<dbReference type="RefSeq" id="NP_001273586.1">
    <molecule id="Q96MH6-1"/>
    <property type="nucleotide sequence ID" value="NM_001286657.2"/>
</dbReference>
<dbReference type="RefSeq" id="NP_001273589.1">
    <molecule id="Q96MH6-3"/>
    <property type="nucleotide sequence ID" value="NM_001286660.2"/>
</dbReference>
<dbReference type="RefSeq" id="NP_001350105.1">
    <molecule id="Q96MH6-1"/>
    <property type="nucleotide sequence ID" value="NM_001363176.1"/>
</dbReference>
<dbReference type="RefSeq" id="NP_689630.1">
    <molecule id="Q96MH6-2"/>
    <property type="nucleotide sequence ID" value="NM_152417.3"/>
</dbReference>
<dbReference type="RefSeq" id="XP_005251207.1">
    <property type="nucleotide sequence ID" value="XM_005251150.1"/>
</dbReference>
<dbReference type="RefSeq" id="XP_011515756.1">
    <property type="nucleotide sequence ID" value="XM_011517454.1"/>
</dbReference>
<dbReference type="SMR" id="Q96MH6"/>
<dbReference type="BioGRID" id="126482">
    <property type="interactions" value="46"/>
</dbReference>
<dbReference type="FunCoup" id="Q96MH6">
    <property type="interactions" value="3025"/>
</dbReference>
<dbReference type="IntAct" id="Q96MH6">
    <property type="interactions" value="34"/>
</dbReference>
<dbReference type="STRING" id="9606.ENSP00000395204"/>
<dbReference type="TCDB" id="9.B.446.1.1">
    <property type="family name" value="the sterol-regulated lysoplasmalogenase (tmem68) family"/>
</dbReference>
<dbReference type="GlyGen" id="Q96MH6">
    <property type="glycosylation" value="1 site"/>
</dbReference>
<dbReference type="iPTMnet" id="Q96MH6"/>
<dbReference type="PhosphoSitePlus" id="Q96MH6"/>
<dbReference type="BioMuta" id="TMEM68"/>
<dbReference type="DMDM" id="118574371"/>
<dbReference type="jPOST" id="Q96MH6"/>
<dbReference type="MassIVE" id="Q96MH6"/>
<dbReference type="PaxDb" id="9606-ENSP00000395204"/>
<dbReference type="PeptideAtlas" id="Q96MH6"/>
<dbReference type="ProteomicsDB" id="77357">
    <molecule id="Q96MH6-1"/>
</dbReference>
<dbReference type="ProteomicsDB" id="77358">
    <molecule id="Q96MH6-2"/>
</dbReference>
<dbReference type="ProteomicsDB" id="77359">
    <molecule id="Q96MH6-3"/>
</dbReference>
<dbReference type="Pumba" id="Q96MH6"/>
<dbReference type="Antibodypedia" id="11708">
    <property type="antibodies" value="56 antibodies from 15 providers"/>
</dbReference>
<dbReference type="DNASU" id="137695"/>
<dbReference type="Ensembl" id="ENST00000334667.6">
    <molecule id="Q96MH6-2"/>
    <property type="protein sequence ID" value="ENSP00000335416.2"/>
    <property type="gene ID" value="ENSG00000167904.16"/>
</dbReference>
<dbReference type="Ensembl" id="ENST00000434581.7">
    <molecule id="Q96MH6-1"/>
    <property type="protein sequence ID" value="ENSP00000395204.2"/>
    <property type="gene ID" value="ENSG00000167904.16"/>
</dbReference>
<dbReference type="Ensembl" id="ENST00000521229.5">
    <molecule id="Q96MH6-3"/>
    <property type="protein sequence ID" value="ENSP00000429210.1"/>
    <property type="gene ID" value="ENSG00000167904.16"/>
</dbReference>
<dbReference type="Ensembl" id="ENST00000522576.5">
    <molecule id="Q96MH6-3"/>
    <property type="protein sequence ID" value="ENSP00000431047.1"/>
    <property type="gene ID" value="ENSG00000167904.16"/>
</dbReference>
<dbReference type="Ensembl" id="ENST00000617782.4">
    <molecule id="Q96MH6-1"/>
    <property type="protein sequence ID" value="ENSP00000478242.1"/>
    <property type="gene ID" value="ENSG00000167904.16"/>
</dbReference>
<dbReference type="GeneID" id="137695"/>
<dbReference type="KEGG" id="hsa:137695"/>
<dbReference type="MANE-Select" id="ENST00000434581.7">
    <property type="protein sequence ID" value="ENSP00000395204.2"/>
    <property type="RefSeq nucleotide sequence ID" value="NM_001286657.2"/>
    <property type="RefSeq protein sequence ID" value="NP_001273586.1"/>
</dbReference>
<dbReference type="UCSC" id="uc003xsg.2">
    <molecule id="Q96MH6-1"/>
    <property type="organism name" value="human"/>
</dbReference>
<dbReference type="AGR" id="HGNC:26510"/>
<dbReference type="CTD" id="137695"/>
<dbReference type="DisGeNET" id="137695"/>
<dbReference type="GeneCards" id="TMEM68"/>
<dbReference type="HGNC" id="HGNC:26510">
    <property type="gene designation" value="TMEM68"/>
</dbReference>
<dbReference type="HPA" id="ENSG00000167904">
    <property type="expression patterns" value="Low tissue specificity"/>
</dbReference>
<dbReference type="neXtProt" id="NX_Q96MH6"/>
<dbReference type="OpenTargets" id="ENSG00000167904"/>
<dbReference type="PharmGKB" id="PA142670781"/>
<dbReference type="VEuPathDB" id="HostDB:ENSG00000167904"/>
<dbReference type="eggNOG" id="KOG4321">
    <property type="taxonomic scope" value="Eukaryota"/>
</dbReference>
<dbReference type="GeneTree" id="ENSGT00390000011782"/>
<dbReference type="HOGENOM" id="CLU_056812_1_0_1"/>
<dbReference type="InParanoid" id="Q96MH6"/>
<dbReference type="OMA" id="SYWNGAR"/>
<dbReference type="OrthoDB" id="44277at2759"/>
<dbReference type="PAN-GO" id="Q96MH6">
    <property type="GO annotations" value="0 GO annotations based on evolutionary models"/>
</dbReference>
<dbReference type="PhylomeDB" id="Q96MH6"/>
<dbReference type="TreeFam" id="TF312828"/>
<dbReference type="PathwayCommons" id="Q96MH6"/>
<dbReference type="SignaLink" id="Q96MH6"/>
<dbReference type="BioGRID-ORCS" id="137695">
    <property type="hits" value="19 hits in 1151 CRISPR screens"/>
</dbReference>
<dbReference type="ChiTaRS" id="TMEM68">
    <property type="organism name" value="human"/>
</dbReference>
<dbReference type="GenomeRNAi" id="137695"/>
<dbReference type="Pharos" id="Q96MH6">
    <property type="development level" value="Tdark"/>
</dbReference>
<dbReference type="PRO" id="PR:Q96MH6"/>
<dbReference type="Proteomes" id="UP000005640">
    <property type="component" value="Chromosome 8"/>
</dbReference>
<dbReference type="RNAct" id="Q96MH6">
    <property type="molecule type" value="protein"/>
</dbReference>
<dbReference type="Bgee" id="ENSG00000167904">
    <property type="expression patterns" value="Expressed in right uterine tube and 169 other cell types or tissues"/>
</dbReference>
<dbReference type="ExpressionAtlas" id="Q96MH6">
    <property type="expression patterns" value="baseline and differential"/>
</dbReference>
<dbReference type="GO" id="GO:0005789">
    <property type="term" value="C:endoplasmic reticulum membrane"/>
    <property type="evidence" value="ECO:0000314"/>
    <property type="project" value="UniProtKB"/>
</dbReference>
<dbReference type="GO" id="GO:0016020">
    <property type="term" value="C:membrane"/>
    <property type="evidence" value="ECO:0000318"/>
    <property type="project" value="GO_Central"/>
</dbReference>
<dbReference type="GO" id="GO:0046027">
    <property type="term" value="F:phospholipid:diacylglycerol acyltransferase activity"/>
    <property type="evidence" value="ECO:0000314"/>
    <property type="project" value="UniProtKB"/>
</dbReference>
<dbReference type="GO" id="GO:0019432">
    <property type="term" value="P:triglyceride biosynthetic process"/>
    <property type="evidence" value="ECO:0000314"/>
    <property type="project" value="UniProtKB"/>
</dbReference>
<dbReference type="CDD" id="cd07987">
    <property type="entry name" value="LPLAT_MGAT-like"/>
    <property type="match status" value="1"/>
</dbReference>
<dbReference type="InterPro" id="IPR002123">
    <property type="entry name" value="Plipid/glycerol_acylTrfase"/>
</dbReference>
<dbReference type="PANTHER" id="PTHR22753:SF14">
    <property type="entry name" value="MONOACYLGLYCEROL_DIACYLGLYCEROL O-ACYLTRANSFERASE"/>
    <property type="match status" value="1"/>
</dbReference>
<dbReference type="PANTHER" id="PTHR22753">
    <property type="entry name" value="TRANSMEMBRANE PROTEIN 68"/>
    <property type="match status" value="1"/>
</dbReference>
<dbReference type="Pfam" id="PF01553">
    <property type="entry name" value="Acyltransferase"/>
    <property type="match status" value="1"/>
</dbReference>
<dbReference type="SUPFAM" id="SSF69593">
    <property type="entry name" value="Glycerol-3-phosphate (1)-acyltransferase"/>
    <property type="match status" value="1"/>
</dbReference>
<accession>Q96MH6</accession>
<accession>Q658X6</accession>
<accession>Q8WUD2</accession>
<organism>
    <name type="scientific">Homo sapiens</name>
    <name type="common">Human</name>
    <dbReference type="NCBI Taxonomy" id="9606"/>
    <lineage>
        <taxon>Eukaryota</taxon>
        <taxon>Metazoa</taxon>
        <taxon>Chordata</taxon>
        <taxon>Craniata</taxon>
        <taxon>Vertebrata</taxon>
        <taxon>Euteleostomi</taxon>
        <taxon>Mammalia</taxon>
        <taxon>Eutheria</taxon>
        <taxon>Euarchontoglires</taxon>
        <taxon>Primates</taxon>
        <taxon>Haplorrhini</taxon>
        <taxon>Catarrhini</taxon>
        <taxon>Hominidae</taxon>
        <taxon>Homo</taxon>
    </lineage>
</organism>